<protein>
    <recommendedName>
        <fullName>Translational activator com</fullName>
    </recommendedName>
    <alternativeName>
        <fullName>Gene product com</fullName>
        <shortName>gpCom</shortName>
    </alternativeName>
</protein>
<name>COM_BPD10</name>
<keyword id="KW-0010">Activator</keyword>
<keyword id="KW-1035">Host cytoplasm</keyword>
<keyword id="KW-0426">Late protein</keyword>
<keyword id="KW-0479">Metal-binding</keyword>
<keyword id="KW-0804">Transcription</keyword>
<keyword id="KW-0805">Transcription regulation</keyword>
<keyword id="KW-0862">Zinc</keyword>
<keyword id="KW-0863">Zinc-finger</keyword>
<dbReference type="EMBL" id="GQ357916">
    <property type="protein sequence ID" value="ACV50314.1"/>
    <property type="molecule type" value="Genomic_DNA"/>
</dbReference>
<dbReference type="EMBL" id="X05926">
    <property type="protein sequence ID" value="CAA29366.1"/>
    <property type="molecule type" value="Genomic_DNA"/>
</dbReference>
<dbReference type="PIR" id="S07972">
    <property type="entry name" value="S07972"/>
</dbReference>
<dbReference type="RefSeq" id="YP_003335803.1">
    <property type="nucleotide sequence ID" value="NC_013594.1"/>
</dbReference>
<dbReference type="GeneID" id="8658866"/>
<dbReference type="KEGG" id="vg:8658866"/>
<dbReference type="OrthoDB" id="22194at10239"/>
<dbReference type="Proteomes" id="UP000000320">
    <property type="component" value="Genome"/>
</dbReference>
<dbReference type="GO" id="GO:0030430">
    <property type="term" value="C:host cell cytoplasm"/>
    <property type="evidence" value="ECO:0007669"/>
    <property type="project" value="UniProtKB-SubCell"/>
</dbReference>
<dbReference type="GO" id="GO:0008270">
    <property type="term" value="F:zinc ion binding"/>
    <property type="evidence" value="ECO:0007669"/>
    <property type="project" value="UniProtKB-KW"/>
</dbReference>
<dbReference type="InterPro" id="IPR019294">
    <property type="entry name" value="Translation_reg_Com"/>
</dbReference>
<dbReference type="Pfam" id="PF10122">
    <property type="entry name" value="Zn_ribbon_Com"/>
    <property type="match status" value="1"/>
</dbReference>
<reference key="1">
    <citation type="submission" date="2009-07" db="EMBL/GenBank/DDBJ databases">
        <authorList>
            <person name="Kropinski A.M."/>
            <person name="Villegas A."/>
            <person name="Lingohr E.J."/>
        </authorList>
    </citation>
    <scope>NUCLEOTIDE SEQUENCE [GENOMIC DNA]</scope>
</reference>
<reference key="2">
    <citation type="journal article" date="1987" name="Nucleic Acids Res.">
        <title>The right end of transposable bacteriophage D108 contains a 520 base pair protein-encoding sequence not present in bacteriophage Mu.</title>
        <authorList>
            <person name="Szatmari G.B."/>
            <person name="Lapointe M."/>
            <person name="Dubow M.S."/>
        </authorList>
    </citation>
    <scope>NUCLEOTIDE SEQUENCE [GENOMIC DNA] OF 1-38</scope>
</reference>
<gene>
    <name type="primary">com</name>
</gene>
<evidence type="ECO:0000250" key="1"/>
<evidence type="ECO:0000305" key="2"/>
<organism>
    <name type="scientific">Escherichia phage D108</name>
    <name type="common">Bacteriophage D108</name>
    <dbReference type="NCBI Taxonomy" id="665033"/>
    <lineage>
        <taxon>Viruses</taxon>
        <taxon>Duplodnaviria</taxon>
        <taxon>Heunggongvirae</taxon>
        <taxon>Uroviricota</taxon>
        <taxon>Caudoviricetes</taxon>
        <taxon>Muvirus</taxon>
        <taxon>Muvirus mu</taxon>
    </lineage>
</organism>
<proteinExistence type="evidence at transcript level"/>
<organismHost>
    <name type="scientific">Escherichia coli</name>
    <dbReference type="NCBI Taxonomy" id="562"/>
</organismHost>
<comment type="function">
    <text evidence="1">Trans-acting positive regulator required for mom mRNA translation. Binds the com-mom mRNA 5' and destabilizes a translation inhibition stem to expose mom translation start signals (By similarity).</text>
</comment>
<comment type="cofactor">
    <cofactor evidence="1">
        <name>Zn(2+)</name>
        <dbReference type="ChEBI" id="CHEBI:29105"/>
    </cofactor>
    <text evidence="1">One Zn(2+) per molecule.</text>
</comment>
<comment type="subcellular location">
    <subcellularLocation>
        <location evidence="1">Host cytoplasm</location>
    </subcellularLocation>
</comment>
<comment type="induction">
    <text>Expressed in the late phase of the viral replicative cycle. Expression of late genes is activated by the viral late transcription activator C.</text>
</comment>
<comment type="similarity">
    <text evidence="2">Belongs to the com family.</text>
</comment>
<feature type="chain" id="PRO_0000077661" description="Translational activator com">
    <location>
        <begin position="1"/>
        <end position="62"/>
    </location>
</feature>
<feature type="zinc finger region" description="Atypical" evidence="1">
    <location>
        <begin position="6"/>
        <end position="29"/>
    </location>
</feature>
<feature type="binding site" evidence="1">
    <location>
        <position position="6"/>
    </location>
    <ligand>
        <name>Zn(2+)</name>
        <dbReference type="ChEBI" id="CHEBI:29105"/>
    </ligand>
</feature>
<feature type="binding site" evidence="1">
    <location>
        <position position="9"/>
    </location>
    <ligand>
        <name>Zn(2+)</name>
        <dbReference type="ChEBI" id="CHEBI:29105"/>
    </ligand>
</feature>
<feature type="binding site" evidence="1">
    <location>
        <position position="26"/>
    </location>
    <ligand>
        <name>Zn(2+)</name>
        <dbReference type="ChEBI" id="CHEBI:29105"/>
    </ligand>
</feature>
<feature type="binding site" evidence="1">
    <location>
        <position position="29"/>
    </location>
    <ligand>
        <name>Zn(2+)</name>
        <dbReference type="ChEBI" id="CHEBI:29105"/>
    </ligand>
</feature>
<accession>Q38200</accession>
<accession>C9DGR3</accession>
<sequence>MKSIRCKNCNKLLFKADSFDHIEIRCPRCKRHIIMLNACEHPTEKHCGKREKITHSDETVRY</sequence>